<gene>
    <name evidence="1" type="primary">dapF</name>
    <name type="ordered locus">TERTU_4180</name>
</gene>
<sequence>MRLRFTKMHGLGNDFVMIDAISQKVTITPERARKLADRHFGVGCDQVLVVESPDNPDADFRYRIFNNDGSEVENCGNGARCFAVFVRQRQLTAKSDIVVETAAGLLRLHVLDDNQVTVNMGVPVLAPAQIPFVTPHEQPEYPLQLDNMEITISAVSMGNPHAVTLVDNLASFPVKTLGAQIETHAQFPNRVNAGFMELISRQEVKLRVFERGVGETLACGTGACAAVVSGIVRGLLDTTVAVHLPGGSLSITWEGAEKPVMMTGPAKAVFHGQVKL</sequence>
<name>DAPF_TERTT</name>
<reference key="1">
    <citation type="journal article" date="2009" name="PLoS ONE">
        <title>The complete genome of Teredinibacter turnerae T7901: an intracellular endosymbiont of marine wood-boring bivalves (shipworms).</title>
        <authorList>
            <person name="Yang J.C."/>
            <person name="Madupu R."/>
            <person name="Durkin A.S."/>
            <person name="Ekborg N.A."/>
            <person name="Pedamallu C.S."/>
            <person name="Hostetler J.B."/>
            <person name="Radune D."/>
            <person name="Toms B.S."/>
            <person name="Henrissat B."/>
            <person name="Coutinho P.M."/>
            <person name="Schwarz S."/>
            <person name="Field L."/>
            <person name="Trindade-Silva A.E."/>
            <person name="Soares C.A.G."/>
            <person name="Elshahawi S."/>
            <person name="Hanora A."/>
            <person name="Schmidt E.W."/>
            <person name="Haygood M.G."/>
            <person name="Posfai J."/>
            <person name="Benner J."/>
            <person name="Madinger C."/>
            <person name="Nove J."/>
            <person name="Anton B."/>
            <person name="Chaudhary K."/>
            <person name="Foster J."/>
            <person name="Holman A."/>
            <person name="Kumar S."/>
            <person name="Lessard P.A."/>
            <person name="Luyten Y.A."/>
            <person name="Slatko B."/>
            <person name="Wood N."/>
            <person name="Wu B."/>
            <person name="Teplitski M."/>
            <person name="Mougous J.D."/>
            <person name="Ward N."/>
            <person name="Eisen J.A."/>
            <person name="Badger J.H."/>
            <person name="Distel D.L."/>
        </authorList>
    </citation>
    <scope>NUCLEOTIDE SEQUENCE [LARGE SCALE GENOMIC DNA]</scope>
    <source>
        <strain>ATCC 39867 / T7901</strain>
    </source>
</reference>
<organism>
    <name type="scientific">Teredinibacter turnerae (strain ATCC 39867 / T7901)</name>
    <dbReference type="NCBI Taxonomy" id="377629"/>
    <lineage>
        <taxon>Bacteria</taxon>
        <taxon>Pseudomonadati</taxon>
        <taxon>Pseudomonadota</taxon>
        <taxon>Gammaproteobacteria</taxon>
        <taxon>Cellvibrionales</taxon>
        <taxon>Cellvibrionaceae</taxon>
        <taxon>Teredinibacter</taxon>
    </lineage>
</organism>
<keyword id="KW-0028">Amino-acid biosynthesis</keyword>
<keyword id="KW-0963">Cytoplasm</keyword>
<keyword id="KW-0413">Isomerase</keyword>
<keyword id="KW-0457">Lysine biosynthesis</keyword>
<keyword id="KW-1185">Reference proteome</keyword>
<comment type="function">
    <text evidence="1">Catalyzes the stereoinversion of LL-2,6-diaminopimelate (L,L-DAP) to meso-diaminopimelate (meso-DAP), a precursor of L-lysine and an essential component of the bacterial peptidoglycan.</text>
</comment>
<comment type="catalytic activity">
    <reaction evidence="1">
        <text>(2S,6S)-2,6-diaminopimelate = meso-2,6-diaminopimelate</text>
        <dbReference type="Rhea" id="RHEA:15393"/>
        <dbReference type="ChEBI" id="CHEBI:57609"/>
        <dbReference type="ChEBI" id="CHEBI:57791"/>
        <dbReference type="EC" id="5.1.1.7"/>
    </reaction>
</comment>
<comment type="pathway">
    <text evidence="1">Amino-acid biosynthesis; L-lysine biosynthesis via DAP pathway; DL-2,6-diaminopimelate from LL-2,6-diaminopimelate: step 1/1.</text>
</comment>
<comment type="subunit">
    <text evidence="1">Homodimer.</text>
</comment>
<comment type="subcellular location">
    <subcellularLocation>
        <location evidence="1">Cytoplasm</location>
    </subcellularLocation>
</comment>
<comment type="similarity">
    <text evidence="1">Belongs to the diaminopimelate epimerase family.</text>
</comment>
<feature type="chain" id="PRO_1000204068" description="Diaminopimelate epimerase">
    <location>
        <begin position="1"/>
        <end position="276"/>
    </location>
</feature>
<feature type="active site" description="Proton donor" evidence="1">
    <location>
        <position position="75"/>
    </location>
</feature>
<feature type="active site" description="Proton acceptor" evidence="1">
    <location>
        <position position="219"/>
    </location>
</feature>
<feature type="binding site" evidence="1">
    <location>
        <position position="13"/>
    </location>
    <ligand>
        <name>substrate</name>
    </ligand>
</feature>
<feature type="binding site" evidence="1">
    <location>
        <position position="46"/>
    </location>
    <ligand>
        <name>substrate</name>
    </ligand>
</feature>
<feature type="binding site" evidence="1">
    <location>
        <position position="66"/>
    </location>
    <ligand>
        <name>substrate</name>
    </ligand>
</feature>
<feature type="binding site" evidence="1">
    <location>
        <begin position="76"/>
        <end position="77"/>
    </location>
    <ligand>
        <name>substrate</name>
    </ligand>
</feature>
<feature type="binding site" evidence="1">
    <location>
        <position position="159"/>
    </location>
    <ligand>
        <name>substrate</name>
    </ligand>
</feature>
<feature type="binding site" evidence="1">
    <location>
        <position position="192"/>
    </location>
    <ligand>
        <name>substrate</name>
    </ligand>
</feature>
<feature type="binding site" evidence="1">
    <location>
        <begin position="210"/>
        <end position="211"/>
    </location>
    <ligand>
        <name>substrate</name>
    </ligand>
</feature>
<feature type="binding site" evidence="1">
    <location>
        <begin position="220"/>
        <end position="221"/>
    </location>
    <ligand>
        <name>substrate</name>
    </ligand>
</feature>
<feature type="site" description="Could be important to modulate the pK values of the two catalytic cysteine residues" evidence="1">
    <location>
        <position position="161"/>
    </location>
</feature>
<feature type="site" description="Could be important to modulate the pK values of the two catalytic cysteine residues" evidence="1">
    <location>
        <position position="210"/>
    </location>
</feature>
<feature type="site" description="Important for dimerization" evidence="1">
    <location>
        <position position="270"/>
    </location>
</feature>
<accession>C5BUL6</accession>
<evidence type="ECO:0000255" key="1">
    <source>
        <dbReference type="HAMAP-Rule" id="MF_00197"/>
    </source>
</evidence>
<dbReference type="EC" id="5.1.1.7" evidence="1"/>
<dbReference type="EMBL" id="CP001614">
    <property type="protein sequence ID" value="ACR12936.1"/>
    <property type="molecule type" value="Genomic_DNA"/>
</dbReference>
<dbReference type="RefSeq" id="WP_015819049.1">
    <property type="nucleotide sequence ID" value="NC_012997.1"/>
</dbReference>
<dbReference type="SMR" id="C5BUL6"/>
<dbReference type="STRING" id="377629.TERTU_4180"/>
<dbReference type="KEGG" id="ttu:TERTU_4180"/>
<dbReference type="eggNOG" id="COG0253">
    <property type="taxonomic scope" value="Bacteria"/>
</dbReference>
<dbReference type="HOGENOM" id="CLU_053306_1_1_6"/>
<dbReference type="OrthoDB" id="9805408at2"/>
<dbReference type="UniPathway" id="UPA00034">
    <property type="reaction ID" value="UER00025"/>
</dbReference>
<dbReference type="Proteomes" id="UP000009080">
    <property type="component" value="Chromosome"/>
</dbReference>
<dbReference type="GO" id="GO:0005829">
    <property type="term" value="C:cytosol"/>
    <property type="evidence" value="ECO:0007669"/>
    <property type="project" value="TreeGrafter"/>
</dbReference>
<dbReference type="GO" id="GO:0008837">
    <property type="term" value="F:diaminopimelate epimerase activity"/>
    <property type="evidence" value="ECO:0007669"/>
    <property type="project" value="UniProtKB-UniRule"/>
</dbReference>
<dbReference type="GO" id="GO:0009089">
    <property type="term" value="P:lysine biosynthetic process via diaminopimelate"/>
    <property type="evidence" value="ECO:0007669"/>
    <property type="project" value="UniProtKB-UniRule"/>
</dbReference>
<dbReference type="FunFam" id="3.10.310.10:FF:000001">
    <property type="entry name" value="Diaminopimelate epimerase"/>
    <property type="match status" value="1"/>
</dbReference>
<dbReference type="Gene3D" id="3.10.310.10">
    <property type="entry name" value="Diaminopimelate Epimerase, Chain A, domain 1"/>
    <property type="match status" value="2"/>
</dbReference>
<dbReference type="HAMAP" id="MF_00197">
    <property type="entry name" value="DAP_epimerase"/>
    <property type="match status" value="1"/>
</dbReference>
<dbReference type="InterPro" id="IPR018510">
    <property type="entry name" value="DAP_epimerase_AS"/>
</dbReference>
<dbReference type="InterPro" id="IPR001653">
    <property type="entry name" value="DAP_epimerase_DapF"/>
</dbReference>
<dbReference type="NCBIfam" id="TIGR00652">
    <property type="entry name" value="DapF"/>
    <property type="match status" value="1"/>
</dbReference>
<dbReference type="PANTHER" id="PTHR31689:SF0">
    <property type="entry name" value="DIAMINOPIMELATE EPIMERASE"/>
    <property type="match status" value="1"/>
</dbReference>
<dbReference type="PANTHER" id="PTHR31689">
    <property type="entry name" value="DIAMINOPIMELATE EPIMERASE, CHLOROPLASTIC"/>
    <property type="match status" value="1"/>
</dbReference>
<dbReference type="Pfam" id="PF01678">
    <property type="entry name" value="DAP_epimerase"/>
    <property type="match status" value="2"/>
</dbReference>
<dbReference type="SUPFAM" id="SSF54506">
    <property type="entry name" value="Diaminopimelate epimerase-like"/>
    <property type="match status" value="1"/>
</dbReference>
<dbReference type="PROSITE" id="PS01326">
    <property type="entry name" value="DAP_EPIMERASE"/>
    <property type="match status" value="1"/>
</dbReference>
<proteinExistence type="inferred from homology"/>
<protein>
    <recommendedName>
        <fullName evidence="1">Diaminopimelate epimerase</fullName>
        <shortName evidence="1">DAP epimerase</shortName>
        <ecNumber evidence="1">5.1.1.7</ecNumber>
    </recommendedName>
    <alternativeName>
        <fullName evidence="1">PLP-independent amino acid racemase</fullName>
    </alternativeName>
</protein>